<protein>
    <recommendedName>
        <fullName>Flagellar filament outer layer protein</fullName>
    </recommendedName>
    <alternativeName>
        <fullName>Sheath protein</fullName>
    </alternativeName>
</protein>
<gene>
    <name type="primary">flaA</name>
    <name type="ordered locus">BB_0668</name>
</gene>
<organism>
    <name type="scientific">Borreliella burgdorferi (strain ATCC 35210 / DSM 4680 / CIP 102532 / B31)</name>
    <name type="common">Borrelia burgdorferi</name>
    <dbReference type="NCBI Taxonomy" id="224326"/>
    <lineage>
        <taxon>Bacteria</taxon>
        <taxon>Pseudomonadati</taxon>
        <taxon>Spirochaetota</taxon>
        <taxon>Spirochaetia</taxon>
        <taxon>Spirochaetales</taxon>
        <taxon>Borreliaceae</taxon>
        <taxon>Borreliella</taxon>
    </lineage>
</organism>
<evidence type="ECO:0000255" key="1"/>
<evidence type="ECO:0000305" key="2"/>
<sequence length="341" mass="38441">MKRKAKSILFFLLSTVLFAQETDGLAEGSKRAEPGELVLDFAELARDPSSTRLDLTNYVDYVYSGASGIVKPEDMVVDLGINNWSVLLTPSARLQAYVKNSVVAPAVVKSESKRYAGDTILGVRVLFPSYSQSSAMIMPPFKIPFYSGESGNQFLGKGLIDNIKTMKEIKVSVYSLGYEIDLEVLFEDMNGMEYAYSMGTLKFKGWADLIWSNPNYIPNISSRIIKDDVPNYPLASSKMRFKAFRVSKSHSSKEQNFIFYVKDLRVLYDKLSVSIDSDIDSESVFKVYETSGTESLRKLKAHETFKRVLKLREKISMPEGSFQNFVEKIESEKPEESSPKN</sequence>
<comment type="function">
    <text>Component of the outer layer of the flagella.</text>
</comment>
<comment type="subunit">
    <text>The flagellum consists of an outer layer composed of repeating units of FlaA around a core that contains several antigenically related polypeptides.</text>
</comment>
<comment type="subcellular location">
    <subcellularLocation>
        <location>Periplasmic flagellum</location>
    </subcellularLocation>
    <subcellularLocation>
        <location>Periplasm</location>
    </subcellularLocation>
</comment>
<name>FLAA_BORBU</name>
<dbReference type="EMBL" id="U62900">
    <property type="protein sequence ID" value="AAC44770.1"/>
    <property type="molecule type" value="Genomic_DNA"/>
</dbReference>
<dbReference type="EMBL" id="AE000783">
    <property type="protein sequence ID" value="AAC67025.2"/>
    <property type="molecule type" value="Genomic_DNA"/>
</dbReference>
<dbReference type="EMBL" id="X91907">
    <property type="protein sequence ID" value="CAA63001.1"/>
    <property type="molecule type" value="Genomic_DNA"/>
</dbReference>
<dbReference type="PIR" id="C70183">
    <property type="entry name" value="C70183"/>
</dbReference>
<dbReference type="RefSeq" id="NP_212802.2">
    <property type="nucleotide sequence ID" value="NC_001318.1"/>
</dbReference>
<dbReference type="RefSeq" id="WP_002656539.1">
    <property type="nucleotide sequence ID" value="NC_001318.1"/>
</dbReference>
<dbReference type="STRING" id="224326.BB_0668"/>
<dbReference type="PaxDb" id="224326-BB_0668"/>
<dbReference type="EnsemblBacteria" id="AAC67025">
    <property type="protein sequence ID" value="AAC67025"/>
    <property type="gene ID" value="BB_0668"/>
</dbReference>
<dbReference type="GeneID" id="56567478"/>
<dbReference type="KEGG" id="bbu:BB_0668"/>
<dbReference type="PATRIC" id="fig|224326.49.peg.1059"/>
<dbReference type="HOGENOM" id="CLU_793811_0_0_12"/>
<dbReference type="OrthoDB" id="350240at2"/>
<dbReference type="Proteomes" id="UP000001807">
    <property type="component" value="Chromosome"/>
</dbReference>
<dbReference type="GO" id="GO:0030288">
    <property type="term" value="C:outer membrane-bounded periplasmic space"/>
    <property type="evidence" value="ECO:0007669"/>
    <property type="project" value="InterPro"/>
</dbReference>
<dbReference type="GO" id="GO:0055040">
    <property type="term" value="C:periplasmic flagellum"/>
    <property type="evidence" value="ECO:0007669"/>
    <property type="project" value="UniProtKB-SubCell"/>
</dbReference>
<dbReference type="GO" id="GO:0071973">
    <property type="term" value="P:bacterial-type flagellum-dependent cell motility"/>
    <property type="evidence" value="ECO:0007669"/>
    <property type="project" value="InterPro"/>
</dbReference>
<dbReference type="InterPro" id="IPR006714">
    <property type="entry name" value="FlaA"/>
</dbReference>
<dbReference type="InterPro" id="IPR016369">
    <property type="entry name" value="FlaA_Spirochaetes"/>
</dbReference>
<dbReference type="Pfam" id="PF04620">
    <property type="entry name" value="FlaA"/>
    <property type="match status" value="1"/>
</dbReference>
<dbReference type="PIRSF" id="PIRSF002892">
    <property type="entry name" value="Flagellin_A"/>
    <property type="match status" value="1"/>
</dbReference>
<reference key="1">
    <citation type="journal article" date="1997" name="J. Bacteriol.">
        <title>An unexpected flaA homolog is present and expressed in Borrelia burgdorferi.</title>
        <authorList>
            <person name="Ge Y."/>
            <person name="Charon N.W."/>
        </authorList>
    </citation>
    <scope>NUCLEOTIDE SEQUENCE [GENOMIC DNA]</scope>
    <source>
        <strain>212</strain>
    </source>
</reference>
<reference key="2">
    <citation type="journal article" date="1997" name="Nature">
        <title>Genomic sequence of a Lyme disease spirochaete, Borrelia burgdorferi.</title>
        <authorList>
            <person name="Fraser C.M."/>
            <person name="Casjens S."/>
            <person name="Huang W.M."/>
            <person name="Sutton G.G."/>
            <person name="Clayton R.A."/>
            <person name="Lathigra R."/>
            <person name="White O."/>
            <person name="Ketchum K.A."/>
            <person name="Dodson R.J."/>
            <person name="Hickey E.K."/>
            <person name="Gwinn M.L."/>
            <person name="Dougherty B.A."/>
            <person name="Tomb J.-F."/>
            <person name="Fleischmann R.D."/>
            <person name="Richardson D.L."/>
            <person name="Peterson J.D."/>
            <person name="Kerlavage A.R."/>
            <person name="Quackenbush J."/>
            <person name="Salzberg S.L."/>
            <person name="Hanson M."/>
            <person name="van Vugt R."/>
            <person name="Palmer N."/>
            <person name="Adams M.D."/>
            <person name="Gocayne J.D."/>
            <person name="Weidman J.F."/>
            <person name="Utterback T.R."/>
            <person name="Watthey L."/>
            <person name="McDonald L.A."/>
            <person name="Artiach P."/>
            <person name="Bowman C."/>
            <person name="Garland S.A."/>
            <person name="Fujii C."/>
            <person name="Cotton M.D."/>
            <person name="Horst K."/>
            <person name="Roberts K.M."/>
            <person name="Hatch B."/>
            <person name="Smith H.O."/>
            <person name="Venter J.C."/>
        </authorList>
    </citation>
    <scope>NUCLEOTIDE SEQUENCE [LARGE SCALE GENOMIC DNA]</scope>
    <source>
        <strain>ATCC 35210 / DSM 4680 / CIP 102532 / B31</strain>
    </source>
</reference>
<reference key="3">
    <citation type="journal article" date="1997" name="Res. Microbiol.">
        <title>A cheA cheW operon in Borrelia burgdorferi, the agent of Lyme disease.</title>
        <authorList>
            <person name="Trueba G.A."/>
            <person name="Old I.G."/>
            <person name="Saint-Girons I."/>
            <person name="Johnson R.C."/>
        </authorList>
    </citation>
    <scope>NUCLEOTIDE SEQUENCE [GENOMIC DNA] OF 276-341</scope>
    <source>
        <strain>212</strain>
    </source>
</reference>
<proteinExistence type="inferred from homology"/>
<feature type="signal peptide" evidence="1">
    <location>
        <begin position="1"/>
        <end position="19"/>
    </location>
</feature>
<feature type="chain" id="PRO_0000009351" description="Flagellar filament outer layer protein">
    <location>
        <begin position="20"/>
        <end position="341"/>
    </location>
</feature>
<feature type="sequence conflict" description="In Ref. 1; AAC44770." evidence="2" ref="1">
    <original>EQ</original>
    <variation>VK</variation>
    <location>
        <begin position="254"/>
        <end position="255"/>
    </location>
</feature>
<feature type="sequence conflict" description="In Ref. 1 and 3." evidence="2" ref="1 3">
    <original>MP</original>
    <variation>IA</variation>
    <location>
        <begin position="317"/>
        <end position="318"/>
    </location>
</feature>
<keyword id="KW-0975">Bacterial flagellum</keyword>
<keyword id="KW-0574">Periplasm</keyword>
<keyword id="KW-1185">Reference proteome</keyword>
<keyword id="KW-0732">Signal</keyword>
<accession>P70856</accession>
<accession>O51612</accession>
<accession>Q44876</accession>